<proteinExistence type="evidence at protein level"/>
<accession>Q92572</accession>
<accession>O00647</accession>
<accession>O00676</accession>
<accession>O00721</accession>
<accession>O00727</accession>
<accession>Q53XL4</accession>
<accession>Q6ICQ2</accession>
<protein>
    <recommendedName>
        <fullName>AP-3 complex subunit sigma-1</fullName>
    </recommendedName>
    <alternativeName>
        <fullName>AP-3 complex subunit sigma-3A</fullName>
    </alternativeName>
    <alternativeName>
        <fullName>Adaptor-related protein complex 3 subunit sigma-1</fullName>
    </alternativeName>
    <alternativeName>
        <fullName>Clathrin-associated/assembly/adaptor protein, small 3</fullName>
    </alternativeName>
    <alternativeName>
        <fullName>Sigma-3A-adaptin</fullName>
        <shortName>Sigma3A-adaptin</shortName>
    </alternativeName>
    <alternativeName>
        <fullName>Sigma-adaptin 3a</fullName>
    </alternativeName>
</protein>
<evidence type="ECO:0000250" key="1"/>
<evidence type="ECO:0000269" key="2">
    <source>
    </source>
</evidence>
<evidence type="ECO:0000269" key="3">
    <source>
    </source>
</evidence>
<evidence type="ECO:0000269" key="4">
    <source>
    </source>
</evidence>
<evidence type="ECO:0000305" key="5"/>
<evidence type="ECO:0000312" key="6">
    <source>
        <dbReference type="EMBL" id="AAH00804.1"/>
    </source>
</evidence>
<evidence type="ECO:0007744" key="7">
    <source>
    </source>
</evidence>
<reference key="1">
    <citation type="journal article" date="1996" name="Cytogenet. Cell Genet.">
        <title>Cloning, expression pattern and mapping to 12p 13.2 --&gt; p13.1 of CLAPS3, a gene encoding a novel clathrin-adaptor small chain.</title>
        <authorList>
            <person name="Watanabe T.K."/>
            <person name="Shimizu F."/>
            <person name="Nagata M."/>
            <person name="Takaichi A."/>
            <person name="Fujiwara T."/>
            <person name="Nakamura Y."/>
            <person name="Takahashi E."/>
            <person name="Hirai Y."/>
        </authorList>
    </citation>
    <scope>NUCLEOTIDE SEQUENCE [MRNA]</scope>
    <scope>TISSUE SPECIFICITY</scope>
    <source>
        <tissue>Fetal brain</tissue>
    </source>
</reference>
<reference key="2">
    <citation type="journal article" date="1997" name="J. Cell Biol.">
        <title>Characterization of the adaptor-related protein complex, AP-3.</title>
        <authorList>
            <person name="Simpson F."/>
            <person name="Peden A.A."/>
            <person name="Christopoulou L."/>
            <person name="Robinson M.S."/>
        </authorList>
    </citation>
    <scope>NUCLEOTIDE SEQUENCE [MRNA]</scope>
    <scope>TISSUE SPECIFICITY</scope>
    <source>
        <tissue>Placenta</tissue>
    </source>
</reference>
<reference key="3">
    <citation type="journal article" date="1997" name="EMBO J.">
        <title>AP-3: an adaptor-like protein complex with ubiquitous expression.</title>
        <authorList>
            <person name="Dell'Angelica E.C."/>
            <person name="Ohno H."/>
            <person name="Ooi C.E."/>
            <person name="Rabinovich E."/>
            <person name="Roche K.W."/>
            <person name="Bonifacino J.S."/>
        </authorList>
    </citation>
    <scope>NUCLEOTIDE SEQUENCE [MRNA]</scope>
    <scope>TISSUE SPECIFICITY</scope>
    <source>
        <tissue>Brain</tissue>
        <tissue>Pancreas</tissue>
        <tissue>Placenta</tissue>
    </source>
</reference>
<reference evidence="6" key="4">
    <citation type="submission" date="2003-08" db="EMBL/GenBank/DDBJ databases">
        <title>Cloning of human full-length CDSs in BD Creator(TM) system donor vector.</title>
        <authorList>
            <person name="Kalnine N."/>
            <person name="Chen X."/>
            <person name="Rolfs A."/>
            <person name="Halleck A."/>
            <person name="Hines L."/>
            <person name="Eisenstein S."/>
            <person name="Koundinya M."/>
            <person name="Raphael J."/>
            <person name="Moreira D."/>
            <person name="Kelley T."/>
            <person name="LaBaer J."/>
            <person name="Lin Y."/>
            <person name="Phelan M."/>
            <person name="Farmer A."/>
        </authorList>
    </citation>
    <scope>NUCLEOTIDE SEQUENCE [LARGE SCALE MRNA]</scope>
</reference>
<reference evidence="6" key="5">
    <citation type="submission" date="2004-06" db="EMBL/GenBank/DDBJ databases">
        <title>Cloning of human full open reading frames in Gateway(TM) system entry vector (pDONR201).</title>
        <authorList>
            <person name="Ebert L."/>
            <person name="Schick M."/>
            <person name="Neubert P."/>
            <person name="Schatten R."/>
            <person name="Henze S."/>
            <person name="Korn B."/>
        </authorList>
    </citation>
    <scope>NUCLEOTIDE SEQUENCE [LARGE SCALE MRNA]</scope>
</reference>
<reference key="6">
    <citation type="journal article" date="2004" name="Genome Res.">
        <title>The status, quality, and expansion of the NIH full-length cDNA project: the Mammalian Gene Collection (MGC).</title>
        <authorList>
            <consortium name="The MGC Project Team"/>
        </authorList>
    </citation>
    <scope>NUCLEOTIDE SEQUENCE [LARGE SCALE MRNA]</scope>
    <source>
        <tissue>Placenta</tissue>
    </source>
</reference>
<reference key="7">
    <citation type="journal article" date="2011" name="BMC Syst. Biol.">
        <title>Initial characterization of the human central proteome.</title>
        <authorList>
            <person name="Burkard T.R."/>
            <person name="Planyavsky M."/>
            <person name="Kaupe I."/>
            <person name="Breitwieser F.P."/>
            <person name="Buerckstuemmer T."/>
            <person name="Bennett K.L."/>
            <person name="Superti-Furga G."/>
            <person name="Colinge J."/>
        </authorList>
    </citation>
    <scope>IDENTIFICATION BY MASS SPECTROMETRY [LARGE SCALE ANALYSIS]</scope>
</reference>
<reference key="8">
    <citation type="journal article" date="2013" name="J. Proteome Res.">
        <title>Toward a comprehensive characterization of a human cancer cell phosphoproteome.</title>
        <authorList>
            <person name="Zhou H."/>
            <person name="Di Palma S."/>
            <person name="Preisinger C."/>
            <person name="Peng M."/>
            <person name="Polat A.N."/>
            <person name="Heck A.J."/>
            <person name="Mohammed S."/>
        </authorList>
    </citation>
    <scope>PHOSPHORYLATION [LARGE SCALE ANALYSIS] AT SER-191</scope>
    <scope>IDENTIFICATION BY MASS SPECTROMETRY [LARGE SCALE ANALYSIS]</scope>
    <source>
        <tissue>Erythroleukemia</tissue>
    </source>
</reference>
<feature type="chain" id="PRO_0000193815" description="AP-3 complex subunit sigma-1">
    <location>
        <begin position="1"/>
        <end position="193"/>
    </location>
</feature>
<feature type="modified residue" description="Phosphoserine" evidence="7">
    <location>
        <position position="191"/>
    </location>
</feature>
<feature type="sequence variant" id="VAR_059111" description="In dbSNP:rs7733604.">
    <original>P</original>
    <variation>L</variation>
    <location>
        <position position="158"/>
    </location>
</feature>
<comment type="function">
    <text>Part of the AP-3 complex, an adaptor-related complex which is not clathrin-associated. The complex is associated with the Golgi region as well as more peripheral structures. It facilitates the budding of vesicles from the Golgi membrane and may be directly involved in trafficking to lysosomes. In concert with the BLOC-1 complex, AP-3 is required to target cargos into vesicles assembled at cell bodies for delivery into neurites and nerve terminals.</text>
</comment>
<comment type="subunit">
    <text evidence="1">Adaptor protein complex 3 (AP-3) is a heterotetramer composed of two large adaptins (delta-type subunit AP3D1 and beta-type subunit AP3B1 or AP3B2), a medium adaptin (mu-type subunit AP3M1 or AP3M2) and a small adaptin (sigma-type subunit APS1 or AP3S2). Interacts with AGAP1. AP-3 associates with the BLOC-1 complex (By similarity).</text>
</comment>
<comment type="subcellular location">
    <subcellularLocation>
        <location>Golgi apparatus</location>
    </subcellularLocation>
    <subcellularLocation>
        <location>Cytoplasmic vesicle membrane</location>
        <topology>Peripheral membrane protein</topology>
        <orientation>Cytoplasmic side</orientation>
    </subcellularLocation>
    <text>Component of the coat surrounding the cytoplasmic face of coated vesicles located at the Golgi complex.</text>
</comment>
<comment type="tissue specificity">
    <text evidence="2 3 4">Present in all adult tissues examined.</text>
</comment>
<comment type="similarity">
    <text evidence="5">Belongs to the adaptor complexes small subunit family.</text>
</comment>
<name>AP3S1_HUMAN</name>
<sequence>MIKAILIFNNHGKPRLSKFYQPYSEDTQQQIIRETFHLVSKRDENVCNFLEGGLLIGGSDNKLIYRHYATLYFVFCVDSSESELGILDLIQVFVETLDKCFENVCELDLIFHVDKVHNILAEMVMGGMVLETNMNEIVTQIDAQNKLEKSEAGLAGAPARAVSAVKNMNLPEIPRNINIGDISIKVPNLPSFK</sequence>
<dbReference type="EMBL" id="D63643">
    <property type="protein sequence ID" value="BAA09798.1"/>
    <property type="molecule type" value="mRNA"/>
</dbReference>
<dbReference type="EMBL" id="U91932">
    <property type="protein sequence ID" value="AAD03779.1"/>
    <property type="molecule type" value="mRNA"/>
</dbReference>
<dbReference type="EMBL" id="X99458">
    <property type="protein sequence ID" value="CAA67823.1"/>
    <property type="molecule type" value="mRNA"/>
</dbReference>
<dbReference type="EMBL" id="BT009833">
    <property type="protein sequence ID" value="AAP88835.1"/>
    <property type="molecule type" value="mRNA"/>
</dbReference>
<dbReference type="EMBL" id="CR450341">
    <property type="protein sequence ID" value="CAG29337.1"/>
    <property type="molecule type" value="mRNA"/>
</dbReference>
<dbReference type="EMBL" id="BC000804">
    <property type="protein sequence ID" value="AAH00804.1"/>
    <property type="molecule type" value="mRNA"/>
</dbReference>
<dbReference type="CCDS" id="CCDS4123.1"/>
<dbReference type="RefSeq" id="NP_001002924.2">
    <property type="nucleotide sequence ID" value="NM_001002924.2"/>
</dbReference>
<dbReference type="RefSeq" id="NP_001275.1">
    <property type="nucleotide sequence ID" value="NM_001284.4"/>
</dbReference>
<dbReference type="RefSeq" id="NP_001305019.1">
    <property type="nucleotide sequence ID" value="NM_001318090.1"/>
</dbReference>
<dbReference type="RefSeq" id="NP_001305020.1">
    <property type="nucleotide sequence ID" value="NM_001318091.1"/>
</dbReference>
<dbReference type="RefSeq" id="NP_001305022.1">
    <property type="nucleotide sequence ID" value="NM_001318093.1"/>
</dbReference>
<dbReference type="RefSeq" id="NP_001305023.1">
    <property type="nucleotide sequence ID" value="NM_001318094.1"/>
</dbReference>
<dbReference type="PDB" id="9C58">
    <property type="method" value="EM"/>
    <property type="resolution" value="4.70 A"/>
    <property type="chains" value="S=1-193"/>
</dbReference>
<dbReference type="PDB" id="9C59">
    <property type="method" value="EM"/>
    <property type="resolution" value="4.30 A"/>
    <property type="chains" value="S/s=1-193"/>
</dbReference>
<dbReference type="PDB" id="9C5B">
    <property type="method" value="EM"/>
    <property type="resolution" value="4.50 A"/>
    <property type="chains" value="S=1-193"/>
</dbReference>
<dbReference type="PDB" id="9C5C">
    <property type="method" value="EM"/>
    <property type="resolution" value="3.60 A"/>
    <property type="chains" value="S=1-151"/>
</dbReference>
<dbReference type="PDBsum" id="9C58"/>
<dbReference type="PDBsum" id="9C59"/>
<dbReference type="PDBsum" id="9C5B"/>
<dbReference type="PDBsum" id="9C5C"/>
<dbReference type="EMDB" id="EMD-45207"/>
<dbReference type="EMDB" id="EMD-45208"/>
<dbReference type="EMDB" id="EMD-45210"/>
<dbReference type="EMDB" id="EMD-45211"/>
<dbReference type="EMDB" id="EMD-45212"/>
<dbReference type="EMDB" id="EMD-45213"/>
<dbReference type="EMDB" id="EMD-45214"/>
<dbReference type="SMR" id="Q92572"/>
<dbReference type="BioGRID" id="107590">
    <property type="interactions" value="134"/>
</dbReference>
<dbReference type="ComplexPortal" id="CPX-5051">
    <property type="entry name" value="Ubiquitous AP-3 Adaptor complex, sigma3a variant"/>
</dbReference>
<dbReference type="ComplexPortal" id="CPX-5055">
    <property type="entry name" value="Neuronal AP-3 Adaptor complex, sigma3a variant"/>
</dbReference>
<dbReference type="CORUM" id="Q92572"/>
<dbReference type="FunCoup" id="Q92572">
    <property type="interactions" value="2931"/>
</dbReference>
<dbReference type="IntAct" id="Q92572">
    <property type="interactions" value="76"/>
</dbReference>
<dbReference type="MINT" id="Q92572"/>
<dbReference type="STRING" id="9606.ENSP00000325369"/>
<dbReference type="GlyGen" id="Q92572">
    <property type="glycosylation" value="1 site, 1 O-linked glycan (1 site)"/>
</dbReference>
<dbReference type="iPTMnet" id="Q92572"/>
<dbReference type="MetOSite" id="Q92572"/>
<dbReference type="PhosphoSitePlus" id="Q92572"/>
<dbReference type="BioMuta" id="AP3S1"/>
<dbReference type="jPOST" id="Q92572"/>
<dbReference type="MassIVE" id="Q92572"/>
<dbReference type="PaxDb" id="9606-ENSP00000325369"/>
<dbReference type="PeptideAtlas" id="Q92572"/>
<dbReference type="ProteomicsDB" id="75333"/>
<dbReference type="Pumba" id="Q92572"/>
<dbReference type="TopDownProteomics" id="Q92572"/>
<dbReference type="Antibodypedia" id="25448">
    <property type="antibodies" value="129 antibodies from 22 providers"/>
</dbReference>
<dbReference type="DNASU" id="1176"/>
<dbReference type="Ensembl" id="ENST00000316788.12">
    <property type="protein sequence ID" value="ENSP00000325369.7"/>
    <property type="gene ID" value="ENSG00000177879.17"/>
</dbReference>
<dbReference type="GeneID" id="1176"/>
<dbReference type="KEGG" id="hsa:1176"/>
<dbReference type="MANE-Select" id="ENST00000316788.12">
    <property type="protein sequence ID" value="ENSP00000325369.7"/>
    <property type="RefSeq nucleotide sequence ID" value="NM_001284.4"/>
    <property type="RefSeq protein sequence ID" value="NP_001275.1"/>
</dbReference>
<dbReference type="UCSC" id="uc003krl.4">
    <property type="organism name" value="human"/>
</dbReference>
<dbReference type="AGR" id="HGNC:2013"/>
<dbReference type="CTD" id="1176"/>
<dbReference type="DisGeNET" id="1176"/>
<dbReference type="GeneCards" id="AP3S1"/>
<dbReference type="HGNC" id="HGNC:2013">
    <property type="gene designation" value="AP3S1"/>
</dbReference>
<dbReference type="HPA" id="ENSG00000177879">
    <property type="expression patterns" value="Low tissue specificity"/>
</dbReference>
<dbReference type="MIM" id="601507">
    <property type="type" value="gene"/>
</dbReference>
<dbReference type="neXtProt" id="NX_Q92572"/>
<dbReference type="OpenTargets" id="ENSG00000177879"/>
<dbReference type="PharmGKB" id="PA24862"/>
<dbReference type="VEuPathDB" id="HostDB:ENSG00000177879"/>
<dbReference type="eggNOG" id="KOG0936">
    <property type="taxonomic scope" value="Eukaryota"/>
</dbReference>
<dbReference type="GeneTree" id="ENSGT00970000193421"/>
<dbReference type="HOGENOM" id="CLU_061221_2_2_1"/>
<dbReference type="InParanoid" id="Q92572"/>
<dbReference type="OMA" id="DLIFNWQ"/>
<dbReference type="OrthoDB" id="10261046at2759"/>
<dbReference type="PAN-GO" id="Q92572">
    <property type="GO annotations" value="2 GO annotations based on evolutionary models"/>
</dbReference>
<dbReference type="PhylomeDB" id="Q92572"/>
<dbReference type="TreeFam" id="TF300189"/>
<dbReference type="PathwayCommons" id="Q92572"/>
<dbReference type="Reactome" id="R-HSA-432722">
    <property type="pathway name" value="Golgi Associated Vesicle Biogenesis"/>
</dbReference>
<dbReference type="SignaLink" id="Q92572"/>
<dbReference type="SIGNOR" id="Q92572"/>
<dbReference type="BioGRID-ORCS" id="1176">
    <property type="hits" value="72 hits in 1145 CRISPR screens"/>
</dbReference>
<dbReference type="CD-CODE" id="FB4E32DD">
    <property type="entry name" value="Presynaptic clusters and postsynaptic densities"/>
</dbReference>
<dbReference type="ChiTaRS" id="AP3S1">
    <property type="organism name" value="human"/>
</dbReference>
<dbReference type="GeneWiki" id="AP3S1"/>
<dbReference type="GenomeRNAi" id="1176"/>
<dbReference type="Pharos" id="Q92572">
    <property type="development level" value="Tbio"/>
</dbReference>
<dbReference type="PRO" id="PR:Q92572"/>
<dbReference type="Proteomes" id="UP000005640">
    <property type="component" value="Chromosome 5"/>
</dbReference>
<dbReference type="RNAct" id="Q92572">
    <property type="molecule type" value="protein"/>
</dbReference>
<dbReference type="Bgee" id="ENSG00000177879">
    <property type="expression patterns" value="Expressed in calcaneal tendon and 97 other cell types or tissues"/>
</dbReference>
<dbReference type="ExpressionAtlas" id="Q92572">
    <property type="expression patterns" value="baseline and differential"/>
</dbReference>
<dbReference type="GO" id="GO:0030123">
    <property type="term" value="C:AP-3 adaptor complex"/>
    <property type="evidence" value="ECO:0000314"/>
    <property type="project" value="FlyBase"/>
</dbReference>
<dbReference type="GO" id="GO:0030119">
    <property type="term" value="C:AP-type membrane coat adaptor complex"/>
    <property type="evidence" value="ECO:0000304"/>
    <property type="project" value="ProtInc"/>
</dbReference>
<dbReference type="GO" id="GO:1904115">
    <property type="term" value="C:axon cytoplasm"/>
    <property type="evidence" value="ECO:0007669"/>
    <property type="project" value="GOC"/>
</dbReference>
<dbReference type="GO" id="GO:0030659">
    <property type="term" value="C:cytoplasmic vesicle membrane"/>
    <property type="evidence" value="ECO:0007669"/>
    <property type="project" value="UniProtKB-SubCell"/>
</dbReference>
<dbReference type="GO" id="GO:0005769">
    <property type="term" value="C:early endosome"/>
    <property type="evidence" value="ECO:0000303"/>
    <property type="project" value="ComplexPortal"/>
</dbReference>
<dbReference type="GO" id="GO:0005794">
    <property type="term" value="C:Golgi apparatus"/>
    <property type="evidence" value="ECO:0007669"/>
    <property type="project" value="UniProtKB-SubCell"/>
</dbReference>
<dbReference type="GO" id="GO:0043231">
    <property type="term" value="C:intracellular membrane-bounded organelle"/>
    <property type="evidence" value="ECO:0000314"/>
    <property type="project" value="HPA"/>
</dbReference>
<dbReference type="GO" id="GO:0098793">
    <property type="term" value="C:presynapse"/>
    <property type="evidence" value="ECO:0007669"/>
    <property type="project" value="GOC"/>
</dbReference>
<dbReference type="GO" id="GO:0030133">
    <property type="term" value="C:transport vesicle"/>
    <property type="evidence" value="ECO:0000304"/>
    <property type="project" value="ProtInc"/>
</dbReference>
<dbReference type="GO" id="GO:0008089">
    <property type="term" value="P:anterograde axonal transport"/>
    <property type="evidence" value="ECO:0000250"/>
    <property type="project" value="UniProtKB"/>
</dbReference>
<dbReference type="GO" id="GO:0048490">
    <property type="term" value="P:anterograde synaptic vesicle transport"/>
    <property type="evidence" value="ECO:0000250"/>
    <property type="project" value="UniProtKB"/>
</dbReference>
<dbReference type="GO" id="GO:0035654">
    <property type="term" value="P:clathrin-coated vesicle cargo loading, AP-3-mediated"/>
    <property type="evidence" value="ECO:0000303"/>
    <property type="project" value="ComplexPortal"/>
</dbReference>
<dbReference type="GO" id="GO:0006896">
    <property type="term" value="P:Golgi to vacuole transport"/>
    <property type="evidence" value="ECO:0007669"/>
    <property type="project" value="InterPro"/>
</dbReference>
<dbReference type="GO" id="GO:0008286">
    <property type="term" value="P:insulin receptor signaling pathway"/>
    <property type="evidence" value="ECO:0000304"/>
    <property type="project" value="ProtInc"/>
</dbReference>
<dbReference type="GO" id="GO:0006886">
    <property type="term" value="P:intracellular protein transport"/>
    <property type="evidence" value="ECO:0007669"/>
    <property type="project" value="InterPro"/>
</dbReference>
<dbReference type="GO" id="GO:0046907">
    <property type="term" value="P:intracellular transport"/>
    <property type="evidence" value="ECO:0000303"/>
    <property type="project" value="ComplexPortal"/>
</dbReference>
<dbReference type="GO" id="GO:1903232">
    <property type="term" value="P:melanosome assembly"/>
    <property type="evidence" value="ECO:0000303"/>
    <property type="project" value="ComplexPortal"/>
</dbReference>
<dbReference type="GO" id="GO:0060155">
    <property type="term" value="P:platelet dense granule organization"/>
    <property type="evidence" value="ECO:0000303"/>
    <property type="project" value="ComplexPortal"/>
</dbReference>
<dbReference type="GO" id="GO:0016183">
    <property type="term" value="P:synaptic vesicle coating"/>
    <property type="evidence" value="ECO:0000303"/>
    <property type="project" value="ComplexPortal"/>
</dbReference>
<dbReference type="GO" id="GO:0036465">
    <property type="term" value="P:synaptic vesicle recycling"/>
    <property type="evidence" value="ECO:0000303"/>
    <property type="project" value="ComplexPortal"/>
</dbReference>
<dbReference type="GO" id="GO:0016192">
    <property type="term" value="P:vesicle-mediated transport"/>
    <property type="evidence" value="ECO:0000318"/>
    <property type="project" value="GO_Central"/>
</dbReference>
<dbReference type="CDD" id="cd14834">
    <property type="entry name" value="AP3_sigma"/>
    <property type="match status" value="1"/>
</dbReference>
<dbReference type="FunFam" id="3.30.450.60:FF:000001">
    <property type="entry name" value="AP complex subunit sigma"/>
    <property type="match status" value="1"/>
</dbReference>
<dbReference type="Gene3D" id="3.30.450.60">
    <property type="match status" value="1"/>
</dbReference>
<dbReference type="InterPro" id="IPR016635">
    <property type="entry name" value="AP_complex_ssu"/>
</dbReference>
<dbReference type="InterPro" id="IPR022775">
    <property type="entry name" value="AP_mu_sigma_su"/>
</dbReference>
<dbReference type="InterPro" id="IPR027155">
    <property type="entry name" value="APS3"/>
</dbReference>
<dbReference type="InterPro" id="IPR000804">
    <property type="entry name" value="Clathrin_sm-chain_CS"/>
</dbReference>
<dbReference type="InterPro" id="IPR011012">
    <property type="entry name" value="Longin-like_dom_sf"/>
</dbReference>
<dbReference type="PANTHER" id="PTHR11753">
    <property type="entry name" value="ADAPTOR COMPLEXES SMALL SUBUNIT FAMILY"/>
    <property type="match status" value="1"/>
</dbReference>
<dbReference type="Pfam" id="PF01217">
    <property type="entry name" value="Clat_adaptor_s"/>
    <property type="match status" value="1"/>
</dbReference>
<dbReference type="SUPFAM" id="SSF64356">
    <property type="entry name" value="SNARE-like"/>
    <property type="match status" value="1"/>
</dbReference>
<dbReference type="PROSITE" id="PS00989">
    <property type="entry name" value="CLAT_ADAPTOR_S"/>
    <property type="match status" value="1"/>
</dbReference>
<keyword id="KW-0002">3D-structure</keyword>
<keyword id="KW-0968">Cytoplasmic vesicle</keyword>
<keyword id="KW-0333">Golgi apparatus</keyword>
<keyword id="KW-0472">Membrane</keyword>
<keyword id="KW-0597">Phosphoprotein</keyword>
<keyword id="KW-0653">Protein transport</keyword>
<keyword id="KW-1267">Proteomics identification</keyword>
<keyword id="KW-1185">Reference proteome</keyword>
<keyword id="KW-0813">Transport</keyword>
<gene>
    <name type="primary">AP3S1</name>
    <name type="synonym">CLAPS3</name>
</gene>
<organism>
    <name type="scientific">Homo sapiens</name>
    <name type="common">Human</name>
    <dbReference type="NCBI Taxonomy" id="9606"/>
    <lineage>
        <taxon>Eukaryota</taxon>
        <taxon>Metazoa</taxon>
        <taxon>Chordata</taxon>
        <taxon>Craniata</taxon>
        <taxon>Vertebrata</taxon>
        <taxon>Euteleostomi</taxon>
        <taxon>Mammalia</taxon>
        <taxon>Eutheria</taxon>
        <taxon>Euarchontoglires</taxon>
        <taxon>Primates</taxon>
        <taxon>Haplorrhini</taxon>
        <taxon>Catarrhini</taxon>
        <taxon>Hominidae</taxon>
        <taxon>Homo</taxon>
    </lineage>
</organism>